<keyword id="KW-1003">Cell membrane</keyword>
<keyword id="KW-0472">Membrane</keyword>
<keyword id="KW-0520">NAD</keyword>
<keyword id="KW-0874">Quinone</keyword>
<keyword id="KW-1278">Translocase</keyword>
<keyword id="KW-0812">Transmembrane</keyword>
<keyword id="KW-1133">Transmembrane helix</keyword>
<keyword id="KW-0830">Ubiquinone</keyword>
<proteinExistence type="inferred from homology"/>
<reference key="1">
    <citation type="journal article" date="2008" name="Chem. Biol. Interact.">
        <title>Extending the Bacillus cereus group genomics to putative food-borne pathogens of different toxicity.</title>
        <authorList>
            <person name="Lapidus A."/>
            <person name="Goltsman E."/>
            <person name="Auger S."/>
            <person name="Galleron N."/>
            <person name="Segurens B."/>
            <person name="Dossat C."/>
            <person name="Land M.L."/>
            <person name="Broussolle V."/>
            <person name="Brillard J."/>
            <person name="Guinebretiere M.-H."/>
            <person name="Sanchis V."/>
            <person name="Nguen-the C."/>
            <person name="Lereclus D."/>
            <person name="Richardson P."/>
            <person name="Wincker P."/>
            <person name="Weissenbach J."/>
            <person name="Ehrlich S.D."/>
            <person name="Sorokin A."/>
        </authorList>
    </citation>
    <scope>NUCLEOTIDE SEQUENCE [LARGE SCALE GENOMIC DNA]</scope>
    <source>
        <strain>DSM 22905 / CIP 110041 / 391-98 / NVH 391-98</strain>
    </source>
</reference>
<comment type="function">
    <text evidence="1">NDH-1 shuttles electrons from NADH, via FMN and iron-sulfur (Fe-S) centers, to quinones in the respiratory chain. The immediate electron acceptor for the enzyme in this species is believed to be ubiquinone. Couples the redox reaction to proton translocation (for every two electrons transferred, four hydrogen ions are translocated across the cytoplasmic membrane), and thus conserves the redox energy in a proton gradient. This subunit may bind ubiquinone.</text>
</comment>
<comment type="catalytic activity">
    <reaction evidence="1">
        <text>a quinone + NADH + 5 H(+)(in) = a quinol + NAD(+) + 4 H(+)(out)</text>
        <dbReference type="Rhea" id="RHEA:57888"/>
        <dbReference type="ChEBI" id="CHEBI:15378"/>
        <dbReference type="ChEBI" id="CHEBI:24646"/>
        <dbReference type="ChEBI" id="CHEBI:57540"/>
        <dbReference type="ChEBI" id="CHEBI:57945"/>
        <dbReference type="ChEBI" id="CHEBI:132124"/>
    </reaction>
</comment>
<comment type="subunit">
    <text evidence="1">NDH-1 is composed of 14 different subunits. Subunits NuoA, H, J, K, L, M, N constitute the membrane sector of the complex.</text>
</comment>
<comment type="subcellular location">
    <subcellularLocation>
        <location evidence="1">Cell membrane</location>
        <topology evidence="1">Multi-pass membrane protein</topology>
    </subcellularLocation>
</comment>
<comment type="similarity">
    <text evidence="1">Belongs to the complex I subunit 1 family.</text>
</comment>
<feature type="chain" id="PRO_1000086933" description="NADH-quinone oxidoreductase subunit H">
    <location>
        <begin position="1"/>
        <end position="333"/>
    </location>
</feature>
<feature type="transmembrane region" description="Helical" evidence="1">
    <location>
        <begin position="15"/>
        <end position="35"/>
    </location>
</feature>
<feature type="transmembrane region" description="Helical" evidence="1">
    <location>
        <begin position="88"/>
        <end position="108"/>
    </location>
</feature>
<feature type="transmembrane region" description="Helical" evidence="1">
    <location>
        <begin position="117"/>
        <end position="137"/>
    </location>
</feature>
<feature type="transmembrane region" description="Helical" evidence="1">
    <location>
        <begin position="159"/>
        <end position="179"/>
    </location>
</feature>
<feature type="transmembrane region" description="Helical" evidence="1">
    <location>
        <begin position="191"/>
        <end position="211"/>
    </location>
</feature>
<feature type="transmembrane region" description="Helical" evidence="1">
    <location>
        <begin position="241"/>
        <end position="261"/>
    </location>
</feature>
<feature type="transmembrane region" description="Helical" evidence="1">
    <location>
        <begin position="273"/>
        <end position="293"/>
    </location>
</feature>
<feature type="transmembrane region" description="Helical" evidence="1">
    <location>
        <begin position="313"/>
        <end position="333"/>
    </location>
</feature>
<protein>
    <recommendedName>
        <fullName evidence="1">NADH-quinone oxidoreductase subunit H</fullName>
        <ecNumber evidence="1">7.1.1.-</ecNumber>
    </recommendedName>
    <alternativeName>
        <fullName evidence="1">NADH dehydrogenase I subunit H</fullName>
    </alternativeName>
    <alternativeName>
        <fullName evidence="1">NDH-1 subunit H</fullName>
    </alternativeName>
</protein>
<gene>
    <name evidence="1" type="primary">nuoH</name>
    <name type="ordered locus">Bcer98_3815</name>
</gene>
<organism>
    <name type="scientific">Bacillus cytotoxicus (strain DSM 22905 / CIP 110041 / 391-98 / NVH 391-98)</name>
    <dbReference type="NCBI Taxonomy" id="315749"/>
    <lineage>
        <taxon>Bacteria</taxon>
        <taxon>Bacillati</taxon>
        <taxon>Bacillota</taxon>
        <taxon>Bacilli</taxon>
        <taxon>Bacillales</taxon>
        <taxon>Bacillaceae</taxon>
        <taxon>Bacillus</taxon>
        <taxon>Bacillus cereus group</taxon>
    </lineage>
</organism>
<sequence>MVERLLESSASWSNFFIFFGLAVLLLFAVLGFVTYGILAERKVMGFMQGRVGPNQVGGRFGLLQTVADVLKLLLKEDSIPKAADKPLFILAPIIAFAPAFMVLAVIPFTSQFQFADIGVGLLYYIAISGITTIGVLTGGWASNNKYSLLGGMRAAAQMISYEIPLVMSVIGIVLLTGSLNLNEIVASQEKVWYIFAQPIGFIIFLIAAVAELNRTPFDLPEAESELVSGYHTEYSGFRWAFFMLAEYVYLFGMASLMTVLFLGGWNPVLFLDFIPGAVWFALKFSAVVFLFIWFRVTFPRMRGDQLMEFGWKVLLPIALANIFLTALIKELFF</sequence>
<evidence type="ECO:0000255" key="1">
    <source>
        <dbReference type="HAMAP-Rule" id="MF_01350"/>
    </source>
</evidence>
<name>NUOH_BACCN</name>
<accession>A7GV47</accession>
<dbReference type="EC" id="7.1.1.-" evidence="1"/>
<dbReference type="EMBL" id="CP000764">
    <property type="protein sequence ID" value="ABS24005.1"/>
    <property type="molecule type" value="Genomic_DNA"/>
</dbReference>
<dbReference type="RefSeq" id="WP_012096263.1">
    <property type="nucleotide sequence ID" value="NC_009674.1"/>
</dbReference>
<dbReference type="SMR" id="A7GV47"/>
<dbReference type="STRING" id="315749.Bcer98_3815"/>
<dbReference type="GeneID" id="33899056"/>
<dbReference type="KEGG" id="bcy:Bcer98_3815"/>
<dbReference type="eggNOG" id="COG1005">
    <property type="taxonomic scope" value="Bacteria"/>
</dbReference>
<dbReference type="HOGENOM" id="CLU_015134_0_1_9"/>
<dbReference type="OrthoDB" id="9803734at2"/>
<dbReference type="Proteomes" id="UP000002300">
    <property type="component" value="Chromosome"/>
</dbReference>
<dbReference type="GO" id="GO:0005886">
    <property type="term" value="C:plasma membrane"/>
    <property type="evidence" value="ECO:0007669"/>
    <property type="project" value="UniProtKB-SubCell"/>
</dbReference>
<dbReference type="GO" id="GO:0003954">
    <property type="term" value="F:NADH dehydrogenase activity"/>
    <property type="evidence" value="ECO:0007669"/>
    <property type="project" value="TreeGrafter"/>
</dbReference>
<dbReference type="GO" id="GO:0016655">
    <property type="term" value="F:oxidoreductase activity, acting on NAD(P)H, quinone or similar compound as acceptor"/>
    <property type="evidence" value="ECO:0007669"/>
    <property type="project" value="UniProtKB-UniRule"/>
</dbReference>
<dbReference type="GO" id="GO:0048038">
    <property type="term" value="F:quinone binding"/>
    <property type="evidence" value="ECO:0007669"/>
    <property type="project" value="UniProtKB-KW"/>
</dbReference>
<dbReference type="GO" id="GO:0009060">
    <property type="term" value="P:aerobic respiration"/>
    <property type="evidence" value="ECO:0007669"/>
    <property type="project" value="TreeGrafter"/>
</dbReference>
<dbReference type="HAMAP" id="MF_01350">
    <property type="entry name" value="NDH1_NuoH"/>
    <property type="match status" value="1"/>
</dbReference>
<dbReference type="InterPro" id="IPR001694">
    <property type="entry name" value="NADH_UbQ_OxRdtase_su1/FPO"/>
</dbReference>
<dbReference type="InterPro" id="IPR018086">
    <property type="entry name" value="NADH_UbQ_OxRdtase_su1_CS"/>
</dbReference>
<dbReference type="NCBIfam" id="NF004741">
    <property type="entry name" value="PRK06076.1-2"/>
    <property type="match status" value="1"/>
</dbReference>
<dbReference type="PANTHER" id="PTHR11432">
    <property type="entry name" value="NADH DEHYDROGENASE SUBUNIT 1"/>
    <property type="match status" value="1"/>
</dbReference>
<dbReference type="PANTHER" id="PTHR11432:SF3">
    <property type="entry name" value="NADH-UBIQUINONE OXIDOREDUCTASE CHAIN 1"/>
    <property type="match status" value="1"/>
</dbReference>
<dbReference type="Pfam" id="PF00146">
    <property type="entry name" value="NADHdh"/>
    <property type="match status" value="1"/>
</dbReference>
<dbReference type="PROSITE" id="PS00668">
    <property type="entry name" value="COMPLEX1_ND1_2"/>
    <property type="match status" value="1"/>
</dbReference>